<gene>
    <name evidence="1" type="primary">lpxD</name>
    <name type="ordered locus">Bcen2424_2009</name>
</gene>
<keyword id="KW-0012">Acyltransferase</keyword>
<keyword id="KW-0441">Lipid A biosynthesis</keyword>
<keyword id="KW-0444">Lipid biosynthesis</keyword>
<keyword id="KW-0443">Lipid metabolism</keyword>
<keyword id="KW-0677">Repeat</keyword>
<keyword id="KW-0808">Transferase</keyword>
<evidence type="ECO:0000255" key="1">
    <source>
        <dbReference type="HAMAP-Rule" id="MF_00523"/>
    </source>
</evidence>
<proteinExistence type="inferred from homology"/>
<dbReference type="EC" id="2.3.1.191" evidence="1"/>
<dbReference type="EMBL" id="CP000458">
    <property type="protein sequence ID" value="ABK08760.1"/>
    <property type="molecule type" value="Genomic_DNA"/>
</dbReference>
<dbReference type="RefSeq" id="WP_011549545.1">
    <property type="nucleotide sequence ID" value="NC_008542.1"/>
</dbReference>
<dbReference type="SMR" id="A0K8D3"/>
<dbReference type="KEGG" id="bch:Bcen2424_2009"/>
<dbReference type="HOGENOM" id="CLU_049865_0_0_4"/>
<dbReference type="UniPathway" id="UPA00973"/>
<dbReference type="GO" id="GO:0016020">
    <property type="term" value="C:membrane"/>
    <property type="evidence" value="ECO:0007669"/>
    <property type="project" value="GOC"/>
</dbReference>
<dbReference type="GO" id="GO:0016410">
    <property type="term" value="F:N-acyltransferase activity"/>
    <property type="evidence" value="ECO:0007669"/>
    <property type="project" value="InterPro"/>
</dbReference>
<dbReference type="GO" id="GO:0009245">
    <property type="term" value="P:lipid A biosynthetic process"/>
    <property type="evidence" value="ECO:0007669"/>
    <property type="project" value="UniProtKB-UniRule"/>
</dbReference>
<dbReference type="CDD" id="cd03352">
    <property type="entry name" value="LbH_LpxD"/>
    <property type="match status" value="1"/>
</dbReference>
<dbReference type="Gene3D" id="1.20.5.170">
    <property type="match status" value="1"/>
</dbReference>
<dbReference type="Gene3D" id="2.160.10.10">
    <property type="entry name" value="Hexapeptide repeat proteins"/>
    <property type="match status" value="1"/>
</dbReference>
<dbReference type="Gene3D" id="3.40.1390.10">
    <property type="entry name" value="MurE/MurF, N-terminal domain"/>
    <property type="match status" value="1"/>
</dbReference>
<dbReference type="HAMAP" id="MF_00523">
    <property type="entry name" value="LpxD"/>
    <property type="match status" value="1"/>
</dbReference>
<dbReference type="InterPro" id="IPR001451">
    <property type="entry name" value="Hexapep"/>
</dbReference>
<dbReference type="InterPro" id="IPR018357">
    <property type="entry name" value="Hexapep_transf_CS"/>
</dbReference>
<dbReference type="InterPro" id="IPR007691">
    <property type="entry name" value="LpxD"/>
</dbReference>
<dbReference type="InterPro" id="IPR011004">
    <property type="entry name" value="Trimer_LpxA-like_sf"/>
</dbReference>
<dbReference type="InterPro" id="IPR020573">
    <property type="entry name" value="UDP_GlcNAc_AcTrfase_non-rep"/>
</dbReference>
<dbReference type="NCBIfam" id="TIGR01853">
    <property type="entry name" value="lipid_A_lpxD"/>
    <property type="match status" value="1"/>
</dbReference>
<dbReference type="NCBIfam" id="NF002060">
    <property type="entry name" value="PRK00892.1"/>
    <property type="match status" value="1"/>
</dbReference>
<dbReference type="PANTHER" id="PTHR43378">
    <property type="entry name" value="UDP-3-O-ACYLGLUCOSAMINE N-ACYLTRANSFERASE"/>
    <property type="match status" value="1"/>
</dbReference>
<dbReference type="PANTHER" id="PTHR43378:SF2">
    <property type="entry name" value="UDP-3-O-ACYLGLUCOSAMINE N-ACYLTRANSFERASE 1, MITOCHONDRIAL-RELATED"/>
    <property type="match status" value="1"/>
</dbReference>
<dbReference type="Pfam" id="PF00132">
    <property type="entry name" value="Hexapep"/>
    <property type="match status" value="2"/>
</dbReference>
<dbReference type="Pfam" id="PF14602">
    <property type="entry name" value="Hexapep_2"/>
    <property type="match status" value="1"/>
</dbReference>
<dbReference type="Pfam" id="PF04613">
    <property type="entry name" value="LpxD"/>
    <property type="match status" value="1"/>
</dbReference>
<dbReference type="SUPFAM" id="SSF51161">
    <property type="entry name" value="Trimeric LpxA-like enzymes"/>
    <property type="match status" value="1"/>
</dbReference>
<dbReference type="PROSITE" id="PS00101">
    <property type="entry name" value="HEXAPEP_TRANSFERASES"/>
    <property type="match status" value="3"/>
</dbReference>
<sequence length="364" mass="37152">MALTLEELVKRFGGEIAGDAQCKVGGLAPLDQAGPQQLAFLANPKYLSQVESTRAGAVLIAPKDLEKLGAAAQGRTAGPRNFIVTPNPYAYFARVAQMFIDLATPPRAAGVHPSATIDPAAKVAATAVIGPHVTIEAGAVIEDGVQLDANVFVGRGTTIGAGSHFYPNASVYHGCKVGPRAIVHAGAVIGSDGFGFAPDFVGDGDARTGSWVKIPQVGGVTIGPDVEIGANTTIDRGAMADTVIEECVKIDNQVQIGHNCRIGAYTVIAGSAGIAGSTTIGRHCMIGGAAGIAGHVTLGDYVIITAKSGVSKSLPKAGIYTSAFPAVDHGEWNKSAALVRNLDKLRERIKALEAALAAQGGTDA</sequence>
<comment type="function">
    <text evidence="1">Catalyzes the N-acylation of UDP-3-O-acylglucosamine using 3-hydroxyacyl-ACP as the acyl donor. Is involved in the biosynthesis of lipid A, a phosphorylated glycolipid that anchors the lipopolysaccharide to the outer membrane of the cell.</text>
</comment>
<comment type="catalytic activity">
    <reaction evidence="1">
        <text>a UDP-3-O-[(3R)-3-hydroxyacyl]-alpha-D-glucosamine + a (3R)-hydroxyacyl-[ACP] = a UDP-2-N,3-O-bis[(3R)-3-hydroxyacyl]-alpha-D-glucosamine + holo-[ACP] + H(+)</text>
        <dbReference type="Rhea" id="RHEA:53836"/>
        <dbReference type="Rhea" id="RHEA-COMP:9685"/>
        <dbReference type="Rhea" id="RHEA-COMP:9945"/>
        <dbReference type="ChEBI" id="CHEBI:15378"/>
        <dbReference type="ChEBI" id="CHEBI:64479"/>
        <dbReference type="ChEBI" id="CHEBI:78827"/>
        <dbReference type="ChEBI" id="CHEBI:137740"/>
        <dbReference type="ChEBI" id="CHEBI:137748"/>
        <dbReference type="EC" id="2.3.1.191"/>
    </reaction>
</comment>
<comment type="pathway">
    <text evidence="1">Bacterial outer membrane biogenesis; LPS lipid A biosynthesis.</text>
</comment>
<comment type="subunit">
    <text evidence="1">Homotrimer.</text>
</comment>
<comment type="similarity">
    <text evidence="1">Belongs to the transferase hexapeptide repeat family. LpxD subfamily.</text>
</comment>
<organism>
    <name type="scientific">Burkholderia cenocepacia (strain HI2424)</name>
    <dbReference type="NCBI Taxonomy" id="331272"/>
    <lineage>
        <taxon>Bacteria</taxon>
        <taxon>Pseudomonadati</taxon>
        <taxon>Pseudomonadota</taxon>
        <taxon>Betaproteobacteria</taxon>
        <taxon>Burkholderiales</taxon>
        <taxon>Burkholderiaceae</taxon>
        <taxon>Burkholderia</taxon>
        <taxon>Burkholderia cepacia complex</taxon>
    </lineage>
</organism>
<reference key="1">
    <citation type="submission" date="2006-08" db="EMBL/GenBank/DDBJ databases">
        <title>Complete sequence of chromosome 1 of Burkholderia cenocepacia HI2424.</title>
        <authorList>
            <person name="Copeland A."/>
            <person name="Lucas S."/>
            <person name="Lapidus A."/>
            <person name="Barry K."/>
            <person name="Detter J.C."/>
            <person name="Glavina del Rio T."/>
            <person name="Hammon N."/>
            <person name="Israni S."/>
            <person name="Pitluck S."/>
            <person name="Chain P."/>
            <person name="Malfatti S."/>
            <person name="Shin M."/>
            <person name="Vergez L."/>
            <person name="Schmutz J."/>
            <person name="Larimer F."/>
            <person name="Land M."/>
            <person name="Hauser L."/>
            <person name="Kyrpides N."/>
            <person name="Kim E."/>
            <person name="LiPuma J.J."/>
            <person name="Gonzalez C.F."/>
            <person name="Konstantinidis K."/>
            <person name="Tiedje J.M."/>
            <person name="Richardson P."/>
        </authorList>
    </citation>
    <scope>NUCLEOTIDE SEQUENCE [LARGE SCALE GENOMIC DNA]</scope>
    <source>
        <strain>HI2424</strain>
    </source>
</reference>
<protein>
    <recommendedName>
        <fullName evidence="1">UDP-3-O-acylglucosamine N-acyltransferase</fullName>
        <ecNumber evidence="1">2.3.1.191</ecNumber>
    </recommendedName>
</protein>
<accession>A0K8D3</accession>
<name>LPXD_BURCH</name>
<feature type="chain" id="PRO_1000050929" description="UDP-3-O-acylglucosamine N-acyltransferase">
    <location>
        <begin position="1"/>
        <end position="364"/>
    </location>
</feature>
<feature type="active site" description="Proton acceptor" evidence="1">
    <location>
        <position position="258"/>
    </location>
</feature>